<accession>B0Z5F1</accession>
<gene>
    <name evidence="1" type="primary">rpl20</name>
</gene>
<protein>
    <recommendedName>
        <fullName evidence="1">Large ribosomal subunit protein bL20c</fullName>
    </recommendedName>
    <alternativeName>
        <fullName evidence="2">50S ribosomal protein L20, chloroplastic</fullName>
    </alternativeName>
</protein>
<comment type="function">
    <text evidence="1">Binds directly to 23S ribosomal RNA and is necessary for the in vitro assembly process of the 50S ribosomal subunit. It is not involved in the protein synthesizing functions of that subunit.</text>
</comment>
<comment type="subcellular location">
    <subcellularLocation>
        <location>Plastid</location>
        <location>Chloroplast</location>
    </subcellularLocation>
</comment>
<comment type="similarity">
    <text evidence="1">Belongs to the bacterial ribosomal protein bL20 family.</text>
</comment>
<keyword id="KW-0150">Chloroplast</keyword>
<keyword id="KW-0934">Plastid</keyword>
<keyword id="KW-0687">Ribonucleoprotein</keyword>
<keyword id="KW-0689">Ribosomal protein</keyword>
<keyword id="KW-0694">RNA-binding</keyword>
<keyword id="KW-0699">rRNA-binding</keyword>
<reference key="1">
    <citation type="journal article" date="2008" name="Nucleic Acids Res.">
        <title>The complete nucleotide sequences of the five genetically distinct plastid genomes of Oenothera, subsection Oenothera: I. Sequence evaluation and plastome evolution.</title>
        <authorList>
            <person name="Greiner S."/>
            <person name="Wang X."/>
            <person name="Rauwolf U."/>
            <person name="Silber M.V."/>
            <person name="Mayer K."/>
            <person name="Meurer J."/>
            <person name="Haberer G."/>
            <person name="Herrmann R.G."/>
        </authorList>
    </citation>
    <scope>NUCLEOTIDE SEQUENCE [LARGE SCALE GENOMIC DNA]</scope>
    <source>
        <strain>cv. Atrovirens</strain>
    </source>
</reference>
<dbReference type="EMBL" id="EU262891">
    <property type="protein sequence ID" value="ABX10144.1"/>
    <property type="molecule type" value="Genomic_DNA"/>
</dbReference>
<dbReference type="RefSeq" id="YP_001687474.1">
    <property type="nucleotide sequence ID" value="NC_010362.1"/>
</dbReference>
<dbReference type="SMR" id="B0Z5F1"/>
<dbReference type="GeneID" id="5955396"/>
<dbReference type="GO" id="GO:0009507">
    <property type="term" value="C:chloroplast"/>
    <property type="evidence" value="ECO:0007669"/>
    <property type="project" value="UniProtKB-SubCell"/>
</dbReference>
<dbReference type="GO" id="GO:1990904">
    <property type="term" value="C:ribonucleoprotein complex"/>
    <property type="evidence" value="ECO:0007669"/>
    <property type="project" value="UniProtKB-KW"/>
</dbReference>
<dbReference type="GO" id="GO:0005840">
    <property type="term" value="C:ribosome"/>
    <property type="evidence" value="ECO:0007669"/>
    <property type="project" value="UniProtKB-KW"/>
</dbReference>
<dbReference type="GO" id="GO:0019843">
    <property type="term" value="F:rRNA binding"/>
    <property type="evidence" value="ECO:0007669"/>
    <property type="project" value="UniProtKB-UniRule"/>
</dbReference>
<dbReference type="GO" id="GO:0003735">
    <property type="term" value="F:structural constituent of ribosome"/>
    <property type="evidence" value="ECO:0007669"/>
    <property type="project" value="InterPro"/>
</dbReference>
<dbReference type="GO" id="GO:0000027">
    <property type="term" value="P:ribosomal large subunit assembly"/>
    <property type="evidence" value="ECO:0007669"/>
    <property type="project" value="UniProtKB-UniRule"/>
</dbReference>
<dbReference type="GO" id="GO:0006412">
    <property type="term" value="P:translation"/>
    <property type="evidence" value="ECO:0007669"/>
    <property type="project" value="InterPro"/>
</dbReference>
<dbReference type="CDD" id="cd07026">
    <property type="entry name" value="Ribosomal_L20"/>
    <property type="match status" value="1"/>
</dbReference>
<dbReference type="FunFam" id="1.10.1900.20:FF:000001">
    <property type="entry name" value="50S ribosomal protein L20"/>
    <property type="match status" value="1"/>
</dbReference>
<dbReference type="Gene3D" id="6.10.160.10">
    <property type="match status" value="1"/>
</dbReference>
<dbReference type="Gene3D" id="1.10.1900.20">
    <property type="entry name" value="Ribosomal protein L20"/>
    <property type="match status" value="1"/>
</dbReference>
<dbReference type="HAMAP" id="MF_00382">
    <property type="entry name" value="Ribosomal_bL20"/>
    <property type="match status" value="1"/>
</dbReference>
<dbReference type="InterPro" id="IPR005813">
    <property type="entry name" value="Ribosomal_bL20"/>
</dbReference>
<dbReference type="InterPro" id="IPR049946">
    <property type="entry name" value="RIBOSOMAL_L20_CS"/>
</dbReference>
<dbReference type="InterPro" id="IPR035566">
    <property type="entry name" value="Ribosomal_protein_bL20_C"/>
</dbReference>
<dbReference type="NCBIfam" id="TIGR01032">
    <property type="entry name" value="rplT_bact"/>
    <property type="match status" value="1"/>
</dbReference>
<dbReference type="PANTHER" id="PTHR10986">
    <property type="entry name" value="39S RIBOSOMAL PROTEIN L20"/>
    <property type="match status" value="1"/>
</dbReference>
<dbReference type="Pfam" id="PF00453">
    <property type="entry name" value="Ribosomal_L20"/>
    <property type="match status" value="1"/>
</dbReference>
<dbReference type="PRINTS" id="PR00062">
    <property type="entry name" value="RIBOSOMALL20"/>
</dbReference>
<dbReference type="SUPFAM" id="SSF74731">
    <property type="entry name" value="Ribosomal protein L20"/>
    <property type="match status" value="1"/>
</dbReference>
<dbReference type="PROSITE" id="PS00937">
    <property type="entry name" value="RIBOSOMAL_L20"/>
    <property type="match status" value="1"/>
</dbReference>
<evidence type="ECO:0000255" key="1">
    <source>
        <dbReference type="HAMAP-Rule" id="MF_00382"/>
    </source>
</evidence>
<evidence type="ECO:0000305" key="2"/>
<proteinExistence type="inferred from homology"/>
<name>RK20_OENPA</name>
<geneLocation type="chloroplast"/>
<organism>
    <name type="scientific">Oenothera parviflora</name>
    <name type="common">Small-flowered evening primrose</name>
    <name type="synonym">Oenothera cruciata</name>
    <dbReference type="NCBI Taxonomy" id="482429"/>
    <lineage>
        <taxon>Eukaryota</taxon>
        <taxon>Viridiplantae</taxon>
        <taxon>Streptophyta</taxon>
        <taxon>Embryophyta</taxon>
        <taxon>Tracheophyta</taxon>
        <taxon>Spermatophyta</taxon>
        <taxon>Magnoliopsida</taxon>
        <taxon>eudicotyledons</taxon>
        <taxon>Gunneridae</taxon>
        <taxon>Pentapetalae</taxon>
        <taxon>rosids</taxon>
        <taxon>malvids</taxon>
        <taxon>Myrtales</taxon>
        <taxon>Onagraceae</taxon>
        <taxon>Onagroideae</taxon>
        <taxon>Onagreae</taxon>
        <taxon>Oenothera</taxon>
    </lineage>
</organism>
<sequence>MTRIRRGYIARRRRTKTRFFASSWRGARGNLTRAIIQQRIRAWFSSHRDRTRQKRDFRRLWITRINAAIRENGRSSIYSKLIHNLYKRQLFLNRKMLAQLAILNRNCLYMISNQILKEVDWQESATILEI</sequence>
<feature type="chain" id="PRO_0000355521" description="Large ribosomal subunit protein bL20c">
    <location>
        <begin position="1"/>
        <end position="130"/>
    </location>
</feature>